<evidence type="ECO:0000305" key="1"/>
<name>Y1723_PASMU</name>
<gene>
    <name type="ordered locus">PM1723</name>
</gene>
<reference key="1">
    <citation type="journal article" date="2001" name="Proc. Natl. Acad. Sci. U.S.A.">
        <title>Complete genomic sequence of Pasteurella multocida Pm70.</title>
        <authorList>
            <person name="May B.J."/>
            <person name="Zhang Q."/>
            <person name="Li L.L."/>
            <person name="Paustian M.L."/>
            <person name="Whittam T.S."/>
            <person name="Kapur V."/>
        </authorList>
    </citation>
    <scope>NUCLEOTIDE SEQUENCE [LARGE SCALE GENOMIC DNA]</scope>
    <source>
        <strain>Pm70</strain>
    </source>
</reference>
<keyword id="KW-1185">Reference proteome</keyword>
<protein>
    <recommendedName>
        <fullName>UPF0149 protein PM1723</fullName>
    </recommendedName>
</protein>
<sequence>MSSYSDFSQQLKTAGIALSAAELHGFLTGLICGGIHDQSWQPLLFQFTNENHAYPTALLQEVTQIQQHISKKLADIDGFDFELWLPENEDDVFTRADALSEWTNHFLLGLGLAQPKLDKEKGDIGEAIDDLHDICQLGYDESDDKEELSEALEEIIEYVRTLACLLFTHFQPQLPEQKPVLH</sequence>
<proteinExistence type="inferred from homology"/>
<feature type="chain" id="PRO_0000207562" description="UPF0149 protein PM1723">
    <location>
        <begin position="1"/>
        <end position="182"/>
    </location>
</feature>
<comment type="similarity">
    <text evidence="1">Belongs to the UPF0149 family.</text>
</comment>
<organism>
    <name type="scientific">Pasteurella multocida (strain Pm70)</name>
    <dbReference type="NCBI Taxonomy" id="272843"/>
    <lineage>
        <taxon>Bacteria</taxon>
        <taxon>Pseudomonadati</taxon>
        <taxon>Pseudomonadota</taxon>
        <taxon>Gammaproteobacteria</taxon>
        <taxon>Pasteurellales</taxon>
        <taxon>Pasteurellaceae</taxon>
        <taxon>Pasteurella</taxon>
    </lineage>
</organism>
<dbReference type="EMBL" id="AE004439">
    <property type="protein sequence ID" value="AAK03807.1"/>
    <property type="molecule type" value="Genomic_DNA"/>
</dbReference>
<dbReference type="RefSeq" id="WP_005752234.1">
    <property type="nucleotide sequence ID" value="NC_002663.1"/>
</dbReference>
<dbReference type="SMR" id="Q9CKA2"/>
<dbReference type="STRING" id="272843.PM1723"/>
<dbReference type="EnsemblBacteria" id="AAK03807">
    <property type="protein sequence ID" value="AAK03807"/>
    <property type="gene ID" value="PM1723"/>
</dbReference>
<dbReference type="KEGG" id="pmu:PM1723"/>
<dbReference type="PATRIC" id="fig|272843.6.peg.1744"/>
<dbReference type="HOGENOM" id="CLU_085336_1_0_6"/>
<dbReference type="OrthoDB" id="9783391at2"/>
<dbReference type="Proteomes" id="UP000000809">
    <property type="component" value="Chromosome"/>
</dbReference>
<dbReference type="GO" id="GO:0005829">
    <property type="term" value="C:cytosol"/>
    <property type="evidence" value="ECO:0007669"/>
    <property type="project" value="TreeGrafter"/>
</dbReference>
<dbReference type="FunFam" id="1.20.120.740:FF:000001">
    <property type="entry name" value="UPF0149 protein YgfB"/>
    <property type="match status" value="1"/>
</dbReference>
<dbReference type="Gene3D" id="1.20.120.740">
    <property type="entry name" value="YgfB uncharacterised protein family UPF0149, PF03695"/>
    <property type="match status" value="1"/>
</dbReference>
<dbReference type="HAMAP" id="MF_00346">
    <property type="entry name" value="UPF0149"/>
    <property type="match status" value="1"/>
</dbReference>
<dbReference type="InterPro" id="IPR011978">
    <property type="entry name" value="YgfB-like"/>
</dbReference>
<dbReference type="InterPro" id="IPR036255">
    <property type="entry name" value="YgfB-like_sf"/>
</dbReference>
<dbReference type="NCBIfam" id="NF002477">
    <property type="entry name" value="PRK01736.1"/>
    <property type="match status" value="1"/>
</dbReference>
<dbReference type="NCBIfam" id="TIGR02292">
    <property type="entry name" value="ygfB_yecA"/>
    <property type="match status" value="1"/>
</dbReference>
<dbReference type="PANTHER" id="PTHR37528">
    <property type="entry name" value="UPF0149 PROTEIN YGFB"/>
    <property type="match status" value="1"/>
</dbReference>
<dbReference type="PANTHER" id="PTHR37528:SF1">
    <property type="entry name" value="UPF0149 PROTEIN YGFB"/>
    <property type="match status" value="1"/>
</dbReference>
<dbReference type="Pfam" id="PF03695">
    <property type="entry name" value="UPF0149"/>
    <property type="match status" value="1"/>
</dbReference>
<dbReference type="SUPFAM" id="SSF101327">
    <property type="entry name" value="YgfB-like"/>
    <property type="match status" value="1"/>
</dbReference>
<accession>Q9CKA2</accession>